<accession>Q9BP49</accession>
<proteinExistence type="evidence at transcript level"/>
<evidence type="ECO:0000250" key="1"/>
<evidence type="ECO:0000305" key="2"/>
<dbReference type="EMBL" id="AF215108">
    <property type="protein sequence ID" value="AAG60529.1"/>
    <property type="molecule type" value="mRNA"/>
</dbReference>
<dbReference type="ConoServer" id="786">
    <property type="toxin name" value="TsMEKL-02 (partial)"/>
</dbReference>
<dbReference type="GO" id="GO:0005576">
    <property type="term" value="C:extracellular region"/>
    <property type="evidence" value="ECO:0007669"/>
    <property type="project" value="UniProtKB-SubCell"/>
</dbReference>
<dbReference type="GO" id="GO:0090729">
    <property type="term" value="F:toxin activity"/>
    <property type="evidence" value="ECO:0007669"/>
    <property type="project" value="UniProtKB-KW"/>
</dbReference>
<organism>
    <name type="scientific">Conus tessulatus</name>
    <name type="common">Tessellate cone</name>
    <dbReference type="NCBI Taxonomy" id="101317"/>
    <lineage>
        <taxon>Eukaryota</taxon>
        <taxon>Metazoa</taxon>
        <taxon>Spiralia</taxon>
        <taxon>Lophotrochozoa</taxon>
        <taxon>Mollusca</taxon>
        <taxon>Gastropoda</taxon>
        <taxon>Caenogastropoda</taxon>
        <taxon>Neogastropoda</taxon>
        <taxon>Conoidea</taxon>
        <taxon>Conidae</taxon>
        <taxon>Conus</taxon>
        <taxon>Tesselliconus</taxon>
    </lineage>
</organism>
<protein>
    <recommendedName>
        <fullName>Conotoxin TsMEKL-02</fullName>
    </recommendedName>
</protein>
<feature type="peptide" id="PRO_0000404981" description="Conotoxin TsMEKL-02">
    <location>
        <begin position="1" status="less than"/>
        <end position="20"/>
    </location>
</feature>
<feature type="non-terminal residue">
    <location>
        <position position="1"/>
    </location>
</feature>
<reference key="1">
    <citation type="journal article" date="2001" name="Mol. Biol. Evol.">
        <title>Mechanisms for evolving hypervariability: the case of conopeptides.</title>
        <authorList>
            <person name="Conticello S.G."/>
            <person name="Gilad Y."/>
            <person name="Avidan N."/>
            <person name="Ben-Asher E."/>
            <person name="Levy Z."/>
            <person name="Fainzilber M."/>
        </authorList>
    </citation>
    <scope>NUCLEOTIDE SEQUENCE [MRNA]</scope>
    <source>
        <tissue>Venom duct</tissue>
    </source>
</reference>
<sequence length="20" mass="2092">NNPPCCSGYVCEGVYCAVDV</sequence>
<name>CUU1_CONTS</name>
<keyword id="KW-1015">Disulfide bond</keyword>
<keyword id="KW-0528">Neurotoxin</keyword>
<keyword id="KW-0964">Secreted</keyword>
<keyword id="KW-0800">Toxin</keyword>
<comment type="subcellular location">
    <subcellularLocation>
        <location evidence="1">Secreted</location>
    </subcellularLocation>
</comment>
<comment type="tissue specificity">
    <text evidence="2">Expressed by the venom duct.</text>
</comment>
<comment type="PTM">
    <text evidence="2">Contains disulfide bonds.</text>
</comment>